<dbReference type="EMBL" id="AE000516">
    <property type="protein sequence ID" value="AAK46344.1"/>
    <property type="molecule type" value="Genomic_DNA"/>
</dbReference>
<dbReference type="PIR" id="A70760">
    <property type="entry name" value="A70760"/>
</dbReference>
<dbReference type="RefSeq" id="WP_003410078.1">
    <property type="nucleotide sequence ID" value="NZ_KK341227.1"/>
</dbReference>
<dbReference type="SMR" id="P9WLM4"/>
<dbReference type="KEGG" id="mtc:MT2066"/>
<dbReference type="PATRIC" id="fig|83331.31.peg.2226"/>
<dbReference type="HOGENOM" id="CLU_083287_5_1_11"/>
<dbReference type="Proteomes" id="UP000001020">
    <property type="component" value="Chromosome"/>
</dbReference>
<dbReference type="GO" id="GO:0003700">
    <property type="term" value="F:DNA-binding transcription factor activity"/>
    <property type="evidence" value="ECO:0007669"/>
    <property type="project" value="InterPro"/>
</dbReference>
<dbReference type="GO" id="GO:0006950">
    <property type="term" value="P:response to stress"/>
    <property type="evidence" value="ECO:0007669"/>
    <property type="project" value="TreeGrafter"/>
</dbReference>
<dbReference type="Gene3D" id="1.10.10.10">
    <property type="entry name" value="Winged helix-like DNA-binding domain superfamily/Winged helix DNA-binding domain"/>
    <property type="match status" value="1"/>
</dbReference>
<dbReference type="InterPro" id="IPR000835">
    <property type="entry name" value="HTH_MarR-typ"/>
</dbReference>
<dbReference type="InterPro" id="IPR039422">
    <property type="entry name" value="MarR/SlyA-like"/>
</dbReference>
<dbReference type="InterPro" id="IPR036388">
    <property type="entry name" value="WH-like_DNA-bd_sf"/>
</dbReference>
<dbReference type="InterPro" id="IPR036390">
    <property type="entry name" value="WH_DNA-bd_sf"/>
</dbReference>
<dbReference type="PANTHER" id="PTHR33164:SF43">
    <property type="entry name" value="HTH-TYPE TRANSCRIPTIONAL REPRESSOR YETL"/>
    <property type="match status" value="1"/>
</dbReference>
<dbReference type="PANTHER" id="PTHR33164">
    <property type="entry name" value="TRANSCRIPTIONAL REGULATOR, MARR FAMILY"/>
    <property type="match status" value="1"/>
</dbReference>
<dbReference type="Pfam" id="PF12802">
    <property type="entry name" value="MarR_2"/>
    <property type="match status" value="1"/>
</dbReference>
<dbReference type="SUPFAM" id="SSF46785">
    <property type="entry name" value="Winged helix' DNA-binding domain"/>
    <property type="match status" value="1"/>
</dbReference>
<keyword id="KW-1185">Reference proteome</keyword>
<keyword id="KW-0732">Signal</keyword>
<gene>
    <name type="ordered locus">MT2066</name>
</gene>
<accession>P9WLM4</accession>
<accession>L0T8I6</accession>
<accession>P64927</accession>
<accession>Q10846</accession>
<evidence type="ECO:0000255" key="1"/>
<sequence>MSDEIARLVADVFELAGLLRRSGEVVAAREGHTQARWQLLSVVSDRALTVPQAARRLGVTRQGVQRVANDLVVCGLAELRHNPDHRTSPLLVLTENGRRVLQAITERAIVVNNRLADAVDPAALQATRDSLRRMIVALKAERP</sequence>
<feature type="signal peptide" evidence="1">
    <location>
        <begin position="1"/>
        <end position="27"/>
    </location>
</feature>
<feature type="chain" id="PRO_0000427453" description="Uncharacterized protein MT2066">
    <location>
        <begin position="28"/>
        <end position="143"/>
    </location>
</feature>
<reference key="1">
    <citation type="journal article" date="2002" name="J. Bacteriol.">
        <title>Whole-genome comparison of Mycobacterium tuberculosis clinical and laboratory strains.</title>
        <authorList>
            <person name="Fleischmann R.D."/>
            <person name="Alland D."/>
            <person name="Eisen J.A."/>
            <person name="Carpenter L."/>
            <person name="White O."/>
            <person name="Peterson J.D."/>
            <person name="DeBoy R.T."/>
            <person name="Dodson R.J."/>
            <person name="Gwinn M.L."/>
            <person name="Haft D.H."/>
            <person name="Hickey E.K."/>
            <person name="Kolonay J.F."/>
            <person name="Nelson W.C."/>
            <person name="Umayam L.A."/>
            <person name="Ermolaeva M.D."/>
            <person name="Salzberg S.L."/>
            <person name="Delcher A."/>
            <person name="Utterback T.R."/>
            <person name="Weidman J.F."/>
            <person name="Khouri H.M."/>
            <person name="Gill J."/>
            <person name="Mikula A."/>
            <person name="Bishai W."/>
            <person name="Jacobs W.R. Jr."/>
            <person name="Venter J.C."/>
            <person name="Fraser C.M."/>
        </authorList>
    </citation>
    <scope>NUCLEOTIDE SEQUENCE [LARGE SCALE GENOMIC DNA]</scope>
    <source>
        <strain>CDC 1551 / Oshkosh</strain>
    </source>
</reference>
<name>Y2011_MYCTO</name>
<proteinExistence type="inferred from homology"/>
<organism>
    <name type="scientific">Mycobacterium tuberculosis (strain CDC 1551 / Oshkosh)</name>
    <dbReference type="NCBI Taxonomy" id="83331"/>
    <lineage>
        <taxon>Bacteria</taxon>
        <taxon>Bacillati</taxon>
        <taxon>Actinomycetota</taxon>
        <taxon>Actinomycetes</taxon>
        <taxon>Mycobacteriales</taxon>
        <taxon>Mycobacteriaceae</taxon>
        <taxon>Mycobacterium</taxon>
        <taxon>Mycobacterium tuberculosis complex</taxon>
    </lineage>
</organism>
<protein>
    <recommendedName>
        <fullName>Uncharacterized protein MT2066</fullName>
    </recommendedName>
</protein>